<dbReference type="EMBL" id="AF083223">
    <property type="protein sequence ID" value="AAD03681.1"/>
    <property type="molecule type" value="mRNA"/>
</dbReference>
<dbReference type="EMBL" id="Z81074">
    <property type="protein sequence ID" value="CAB03044.2"/>
    <property type="molecule type" value="Genomic_DNA"/>
</dbReference>
<dbReference type="PIR" id="T21645">
    <property type="entry name" value="T21645"/>
</dbReference>
<dbReference type="PIR" id="T43346">
    <property type="entry name" value="T43346"/>
</dbReference>
<dbReference type="RefSeq" id="NP_501775.1">
    <property type="nucleotide sequence ID" value="NM_069374.11"/>
</dbReference>
<dbReference type="BioGRID" id="42943">
    <property type="interactions" value="9"/>
</dbReference>
<dbReference type="DIP" id="DIP-25524N"/>
<dbReference type="FunCoup" id="O45436">
    <property type="interactions" value="2"/>
</dbReference>
<dbReference type="IntAct" id="O45436">
    <property type="interactions" value="9"/>
</dbReference>
<dbReference type="STRING" id="6239.F32B6.1.1"/>
<dbReference type="PaxDb" id="6239-F32B6.1"/>
<dbReference type="EnsemblMetazoa" id="F32B6.1.1">
    <property type="protein sequence ID" value="F32B6.1.1"/>
    <property type="gene ID" value="WBGene00003603"/>
</dbReference>
<dbReference type="GeneID" id="177839"/>
<dbReference type="KEGG" id="cel:CELE_F32B6.1"/>
<dbReference type="UCSC" id="F32B6.1.2">
    <property type="organism name" value="c. elegans"/>
</dbReference>
<dbReference type="AGR" id="WB:WBGene00003603"/>
<dbReference type="CTD" id="177839"/>
<dbReference type="WormBase" id="F32B6.1">
    <property type="protein sequence ID" value="CE24934"/>
    <property type="gene ID" value="WBGene00003603"/>
    <property type="gene designation" value="nhr-4"/>
</dbReference>
<dbReference type="eggNOG" id="KOG3575">
    <property type="taxonomic scope" value="Eukaryota"/>
</dbReference>
<dbReference type="HOGENOM" id="CLU_007368_3_3_1"/>
<dbReference type="InParanoid" id="O45436"/>
<dbReference type="OMA" id="FGKHYGI"/>
<dbReference type="OrthoDB" id="5837785at2759"/>
<dbReference type="PhylomeDB" id="O45436"/>
<dbReference type="SignaLink" id="O45436"/>
<dbReference type="PRO" id="PR:O45436"/>
<dbReference type="Proteomes" id="UP000001940">
    <property type="component" value="Chromosome IV"/>
</dbReference>
<dbReference type="Bgee" id="WBGene00003603">
    <property type="expression patterns" value="Expressed in pharyngeal muscle cell (C elegans) and 4 other cell types or tissues"/>
</dbReference>
<dbReference type="GO" id="GO:0005634">
    <property type="term" value="C:nucleus"/>
    <property type="evidence" value="ECO:0007669"/>
    <property type="project" value="UniProtKB-SubCell"/>
</dbReference>
<dbReference type="GO" id="GO:0003700">
    <property type="term" value="F:DNA-binding transcription factor activity"/>
    <property type="evidence" value="ECO:0007669"/>
    <property type="project" value="InterPro"/>
</dbReference>
<dbReference type="GO" id="GO:0000978">
    <property type="term" value="F:RNA polymerase II cis-regulatory region sequence-specific DNA binding"/>
    <property type="evidence" value="ECO:0007669"/>
    <property type="project" value="InterPro"/>
</dbReference>
<dbReference type="GO" id="GO:0008270">
    <property type="term" value="F:zinc ion binding"/>
    <property type="evidence" value="ECO:0007669"/>
    <property type="project" value="UniProtKB-KW"/>
</dbReference>
<dbReference type="GO" id="GO:0006355">
    <property type="term" value="P:regulation of DNA-templated transcription"/>
    <property type="evidence" value="ECO:0000318"/>
    <property type="project" value="GO_Central"/>
</dbReference>
<dbReference type="CDD" id="cd06960">
    <property type="entry name" value="NR_DBD_HNF4A"/>
    <property type="match status" value="1"/>
</dbReference>
<dbReference type="CDD" id="cd06157">
    <property type="entry name" value="NR_LBD"/>
    <property type="match status" value="1"/>
</dbReference>
<dbReference type="FunFam" id="3.30.50.10:FF:000030">
    <property type="entry name" value="Nuclear Hormone Receptor family"/>
    <property type="match status" value="1"/>
</dbReference>
<dbReference type="Gene3D" id="3.30.50.10">
    <property type="entry name" value="Erythroid Transcription Factor GATA-1, subunit A"/>
    <property type="match status" value="1"/>
</dbReference>
<dbReference type="Gene3D" id="1.10.565.10">
    <property type="entry name" value="Retinoid X Receptor"/>
    <property type="match status" value="1"/>
</dbReference>
<dbReference type="InterPro" id="IPR052499">
    <property type="entry name" value="C.elegans_NHRs"/>
</dbReference>
<dbReference type="InterPro" id="IPR049636">
    <property type="entry name" value="HNF4-like_DBD"/>
</dbReference>
<dbReference type="InterPro" id="IPR035500">
    <property type="entry name" value="NHR-like_dom_sf"/>
</dbReference>
<dbReference type="InterPro" id="IPR000536">
    <property type="entry name" value="Nucl_hrmn_rcpt_lig-bd"/>
</dbReference>
<dbReference type="InterPro" id="IPR001723">
    <property type="entry name" value="Nuclear_hrmn_rcpt"/>
</dbReference>
<dbReference type="InterPro" id="IPR001628">
    <property type="entry name" value="Znf_hrmn_rcpt"/>
</dbReference>
<dbReference type="InterPro" id="IPR013088">
    <property type="entry name" value="Znf_NHR/GATA"/>
</dbReference>
<dbReference type="PANTHER" id="PTHR47630:SF1">
    <property type="entry name" value="NUCLEAR HORMONE RECEPTOR FAMILY MEMBER NHR-4"/>
    <property type="match status" value="1"/>
</dbReference>
<dbReference type="PANTHER" id="PTHR47630">
    <property type="entry name" value="NUCLEAR HORMONE RECEPTOR FAMILY-RELATED-RELATED"/>
    <property type="match status" value="1"/>
</dbReference>
<dbReference type="Pfam" id="PF00104">
    <property type="entry name" value="Hormone_recep"/>
    <property type="match status" value="1"/>
</dbReference>
<dbReference type="Pfam" id="PF00105">
    <property type="entry name" value="zf-C4"/>
    <property type="match status" value="1"/>
</dbReference>
<dbReference type="PRINTS" id="PR00398">
    <property type="entry name" value="STRDHORMONER"/>
</dbReference>
<dbReference type="PRINTS" id="PR00047">
    <property type="entry name" value="STROIDFINGER"/>
</dbReference>
<dbReference type="SMART" id="SM00430">
    <property type="entry name" value="HOLI"/>
    <property type="match status" value="1"/>
</dbReference>
<dbReference type="SMART" id="SM00399">
    <property type="entry name" value="ZnF_C4"/>
    <property type="match status" value="1"/>
</dbReference>
<dbReference type="SUPFAM" id="SSF57716">
    <property type="entry name" value="Glucocorticoid receptor-like (DNA-binding domain)"/>
    <property type="match status" value="1"/>
</dbReference>
<dbReference type="SUPFAM" id="SSF48508">
    <property type="entry name" value="Nuclear receptor ligand-binding domain"/>
    <property type="match status" value="1"/>
</dbReference>
<dbReference type="PROSITE" id="PS51843">
    <property type="entry name" value="NR_LBD"/>
    <property type="match status" value="1"/>
</dbReference>
<dbReference type="PROSITE" id="PS00031">
    <property type="entry name" value="NUCLEAR_REC_DBD_1"/>
    <property type="match status" value="1"/>
</dbReference>
<dbReference type="PROSITE" id="PS51030">
    <property type="entry name" value="NUCLEAR_REC_DBD_2"/>
    <property type="match status" value="1"/>
</dbReference>
<feature type="chain" id="PRO_0000053758" description="Nuclear hormone receptor family member nhr-4">
    <location>
        <begin position="1"/>
        <end position="492"/>
    </location>
</feature>
<feature type="domain" description="NR LBD" evidence="2">
    <location>
        <begin position="215"/>
        <end position="481"/>
    </location>
</feature>
<feature type="DNA-binding region" description="Nuclear receptor" evidence="1">
    <location>
        <begin position="47"/>
        <end position="122"/>
    </location>
</feature>
<feature type="zinc finger region" description="NR C4-type" evidence="1">
    <location>
        <begin position="50"/>
        <end position="70"/>
    </location>
</feature>
<feature type="zinc finger region" description="NR C4-type" evidence="1">
    <location>
        <begin position="86"/>
        <end position="110"/>
    </location>
</feature>
<feature type="region of interest" description="Disordered" evidence="3">
    <location>
        <begin position="121"/>
        <end position="143"/>
    </location>
</feature>
<comment type="function">
    <text>Orphan nuclear receptor.</text>
</comment>
<comment type="subcellular location">
    <subcellularLocation>
        <location evidence="1">Nucleus</location>
    </subcellularLocation>
</comment>
<comment type="similarity">
    <text evidence="4">Belongs to the nuclear hormone receptor family.</text>
</comment>
<sequence>MNERGMLVDPRFDAFFKLEQIDDYKYDGADTSPSTSNGLPETSNGGRLICDVCGDVAFGKHYGINACNGCKGFFRRSVWSRRQYSCRFGGDCPVVKEHRNVCRSCRLKKCFEVGMNPDSVQNERDRNAKNGGMGGPMSSPTQSSLCKELTISNGQIKRKRLRPETVEKTTQTDGKLEINDDFDFENMQQNPTPPGLLPLKIERISTPPSDLPVPMDFSIHSAVLDIEQKVFYNCPVAVDNSINATKTPITLPFEVVFRQPHLVCNRYPMRFSNTRVLTPEDLIDGWRRHFTYYSDWCHAMDEFKALSPEDQIVLAKKKIILHGWLVHAYYSYKSGCNGICFANGAAHLPEGGHPSITEFYKECMPRYLNYVIYPMHNFQMDDAEMVLIKCIMFFSSESGLSAAGRQIVSAAREKYLSALYNYGRANKCTTSAQATLRIAKFMIMLSAITSLTHLMNEGVHVTSLFNIIEFDELIQATHKTTPPQHSPPAPMG</sequence>
<accession>O45436</accession>
<gene>
    <name type="primary">nhr-4</name>
    <name type="ORF">F32B6.1</name>
</gene>
<organism>
    <name type="scientific">Caenorhabditis elegans</name>
    <dbReference type="NCBI Taxonomy" id="6239"/>
    <lineage>
        <taxon>Eukaryota</taxon>
        <taxon>Metazoa</taxon>
        <taxon>Ecdysozoa</taxon>
        <taxon>Nematoda</taxon>
        <taxon>Chromadorea</taxon>
        <taxon>Rhabditida</taxon>
        <taxon>Rhabditina</taxon>
        <taxon>Rhabditomorpha</taxon>
        <taxon>Rhabditoidea</taxon>
        <taxon>Rhabditidae</taxon>
        <taxon>Peloderinae</taxon>
        <taxon>Caenorhabditis</taxon>
    </lineage>
</organism>
<reference key="1">
    <citation type="journal article" date="1999" name="Genome Res.">
        <title>The nuclear receptor superfamily has undergone extensive proliferation and diversification in nematodes.</title>
        <authorList>
            <person name="Sluder A.E."/>
            <person name="Mathews S.W."/>
            <person name="Hough D."/>
            <person name="Yin V.P."/>
            <person name="Maina C.V."/>
        </authorList>
    </citation>
    <scope>NUCLEOTIDE SEQUENCE [MRNA]</scope>
    <source>
        <strain>Bristol N2</strain>
    </source>
</reference>
<reference key="2">
    <citation type="journal article" date="1998" name="Science">
        <title>Genome sequence of the nematode C. elegans: a platform for investigating biology.</title>
        <authorList>
            <consortium name="The C. elegans sequencing consortium"/>
        </authorList>
    </citation>
    <scope>NUCLEOTIDE SEQUENCE [LARGE SCALE GENOMIC DNA]</scope>
    <source>
        <strain>Bristol N2</strain>
    </source>
</reference>
<proteinExistence type="evidence at transcript level"/>
<evidence type="ECO:0000255" key="1">
    <source>
        <dbReference type="PROSITE-ProRule" id="PRU00407"/>
    </source>
</evidence>
<evidence type="ECO:0000255" key="2">
    <source>
        <dbReference type="PROSITE-ProRule" id="PRU01189"/>
    </source>
</evidence>
<evidence type="ECO:0000256" key="3">
    <source>
        <dbReference type="SAM" id="MobiDB-lite"/>
    </source>
</evidence>
<evidence type="ECO:0000305" key="4"/>
<protein>
    <recommendedName>
        <fullName>Nuclear hormone receptor family member nhr-4</fullName>
    </recommendedName>
</protein>
<keyword id="KW-0238">DNA-binding</keyword>
<keyword id="KW-0479">Metal-binding</keyword>
<keyword id="KW-0539">Nucleus</keyword>
<keyword id="KW-0675">Receptor</keyword>
<keyword id="KW-1185">Reference proteome</keyword>
<keyword id="KW-0804">Transcription</keyword>
<keyword id="KW-0805">Transcription regulation</keyword>
<keyword id="KW-0862">Zinc</keyword>
<keyword id="KW-0863">Zinc-finger</keyword>
<name>NHR4_CAEEL</name>